<proteinExistence type="evidence at transcript level"/>
<comment type="subcellular location">
    <subcellularLocation>
        <location evidence="2">Membrane</location>
        <topology evidence="2">Multi-pass membrane protein</topology>
    </subcellularLocation>
</comment>
<comment type="similarity">
    <text evidence="2">Belongs to the GDT1 family.</text>
</comment>
<comment type="sequence caution" evidence="2">
    <conflict type="erroneous gene model prediction">
        <sequence resource="EMBL-CDS" id="EAZ43426"/>
    </conflict>
</comment>
<organism>
    <name type="scientific">Oryza sativa subsp. japonica</name>
    <name type="common">Rice</name>
    <dbReference type="NCBI Taxonomy" id="39947"/>
    <lineage>
        <taxon>Eukaryota</taxon>
        <taxon>Viridiplantae</taxon>
        <taxon>Streptophyta</taxon>
        <taxon>Embryophyta</taxon>
        <taxon>Tracheophyta</taxon>
        <taxon>Spermatophyta</taxon>
        <taxon>Magnoliopsida</taxon>
        <taxon>Liliopsida</taxon>
        <taxon>Poales</taxon>
        <taxon>Poaceae</taxon>
        <taxon>BOP clade</taxon>
        <taxon>Oryzoideae</taxon>
        <taxon>Oryzeae</taxon>
        <taxon>Oryzinae</taxon>
        <taxon>Oryza</taxon>
        <taxon>Oryza sativa</taxon>
    </lineage>
</organism>
<protein>
    <recommendedName>
        <fullName>GDT1-like protein 4</fullName>
    </recommendedName>
</protein>
<dbReference type="EMBL" id="AP004015">
    <property type="protein sequence ID" value="BAD09101.1"/>
    <property type="molecule type" value="Genomic_DNA"/>
</dbReference>
<dbReference type="EMBL" id="AP008214">
    <property type="protein sequence ID" value="BAF24226.1"/>
    <property type="molecule type" value="Genomic_DNA"/>
</dbReference>
<dbReference type="EMBL" id="AP014964">
    <property type="protein sequence ID" value="BAT06368.1"/>
    <property type="molecule type" value="Genomic_DNA"/>
</dbReference>
<dbReference type="EMBL" id="CM000145">
    <property type="protein sequence ID" value="EAZ43426.1"/>
    <property type="status" value="ALT_SEQ"/>
    <property type="molecule type" value="Genomic_DNA"/>
</dbReference>
<dbReference type="EMBL" id="AK111028">
    <property type="protein sequence ID" value="BAG99125.1"/>
    <property type="molecule type" value="mRNA"/>
</dbReference>
<dbReference type="RefSeq" id="XP_015649029.1">
    <property type="nucleotide sequence ID" value="XM_015793543.1"/>
</dbReference>
<dbReference type="FunCoup" id="Q6ZIB9">
    <property type="interactions" value="1844"/>
</dbReference>
<dbReference type="PaxDb" id="39947-Q6ZIB9"/>
<dbReference type="EnsemblPlants" id="Os08t0528500-01">
    <property type="protein sequence ID" value="Os08t0528500-01"/>
    <property type="gene ID" value="Os08g0528500"/>
</dbReference>
<dbReference type="Gramene" id="Os08t0528500-01">
    <property type="protein sequence ID" value="Os08t0528500-01"/>
    <property type="gene ID" value="Os08g0528500"/>
</dbReference>
<dbReference type="KEGG" id="dosa:Os08g0528500"/>
<dbReference type="eggNOG" id="KOG2881">
    <property type="taxonomic scope" value="Eukaryota"/>
</dbReference>
<dbReference type="HOGENOM" id="CLU_040186_0_1_1"/>
<dbReference type="InParanoid" id="Q6ZIB9"/>
<dbReference type="OMA" id="CSIIVTE"/>
<dbReference type="OrthoDB" id="442680at2759"/>
<dbReference type="Proteomes" id="UP000000763">
    <property type="component" value="Chromosome 8"/>
</dbReference>
<dbReference type="Proteomes" id="UP000007752">
    <property type="component" value="Chromosome 8"/>
</dbReference>
<dbReference type="Proteomes" id="UP000059680">
    <property type="component" value="Chromosome 8"/>
</dbReference>
<dbReference type="GO" id="GO:0005794">
    <property type="term" value="C:Golgi apparatus"/>
    <property type="evidence" value="ECO:0000318"/>
    <property type="project" value="GO_Central"/>
</dbReference>
<dbReference type="GO" id="GO:0016020">
    <property type="term" value="C:membrane"/>
    <property type="evidence" value="ECO:0007669"/>
    <property type="project" value="UniProtKB-SubCell"/>
</dbReference>
<dbReference type="GO" id="GO:0015085">
    <property type="term" value="F:calcium ion transmembrane transporter activity"/>
    <property type="evidence" value="ECO:0000318"/>
    <property type="project" value="GO_Central"/>
</dbReference>
<dbReference type="GO" id="GO:0005384">
    <property type="term" value="F:manganese ion transmembrane transporter activity"/>
    <property type="evidence" value="ECO:0000318"/>
    <property type="project" value="GO_Central"/>
</dbReference>
<dbReference type="GO" id="GO:0070588">
    <property type="term" value="P:calcium ion transmembrane transport"/>
    <property type="evidence" value="ECO:0000318"/>
    <property type="project" value="GO_Central"/>
</dbReference>
<dbReference type="GO" id="GO:0032468">
    <property type="term" value="P:Golgi calcium ion homeostasis"/>
    <property type="evidence" value="ECO:0000318"/>
    <property type="project" value="GO_Central"/>
</dbReference>
<dbReference type="GO" id="GO:0032472">
    <property type="term" value="P:Golgi calcium ion transport"/>
    <property type="evidence" value="ECO:0000318"/>
    <property type="project" value="GO_Central"/>
</dbReference>
<dbReference type="GO" id="GO:0071421">
    <property type="term" value="P:manganese ion transmembrane transport"/>
    <property type="evidence" value="ECO:0000318"/>
    <property type="project" value="GO_Central"/>
</dbReference>
<dbReference type="InterPro" id="IPR001727">
    <property type="entry name" value="GDT1-like"/>
</dbReference>
<dbReference type="PANTHER" id="PTHR12608:SF9">
    <property type="entry name" value="GDT1-LIKE PROTEIN 3"/>
    <property type="match status" value="1"/>
</dbReference>
<dbReference type="PANTHER" id="PTHR12608">
    <property type="entry name" value="TRANSMEMBRANE PROTEIN HTP-1 RELATED"/>
    <property type="match status" value="1"/>
</dbReference>
<dbReference type="Pfam" id="PF01169">
    <property type="entry name" value="GDT1"/>
    <property type="match status" value="2"/>
</dbReference>
<name>GDT14_ORYSJ</name>
<reference key="1">
    <citation type="journal article" date="2005" name="Nature">
        <title>The map-based sequence of the rice genome.</title>
        <authorList>
            <consortium name="International rice genome sequencing project (IRGSP)"/>
        </authorList>
    </citation>
    <scope>NUCLEOTIDE SEQUENCE [LARGE SCALE GENOMIC DNA]</scope>
    <source>
        <strain>cv. Nipponbare</strain>
    </source>
</reference>
<reference key="2">
    <citation type="journal article" date="2008" name="Nucleic Acids Res.">
        <title>The rice annotation project database (RAP-DB): 2008 update.</title>
        <authorList>
            <consortium name="The rice annotation project (RAP)"/>
        </authorList>
    </citation>
    <scope>GENOME REANNOTATION</scope>
    <source>
        <strain>cv. Nipponbare</strain>
    </source>
</reference>
<reference key="3">
    <citation type="journal article" date="2013" name="Rice">
        <title>Improvement of the Oryza sativa Nipponbare reference genome using next generation sequence and optical map data.</title>
        <authorList>
            <person name="Kawahara Y."/>
            <person name="de la Bastide M."/>
            <person name="Hamilton J.P."/>
            <person name="Kanamori H."/>
            <person name="McCombie W.R."/>
            <person name="Ouyang S."/>
            <person name="Schwartz D.C."/>
            <person name="Tanaka T."/>
            <person name="Wu J."/>
            <person name="Zhou S."/>
            <person name="Childs K.L."/>
            <person name="Davidson R.M."/>
            <person name="Lin H."/>
            <person name="Quesada-Ocampo L."/>
            <person name="Vaillancourt B."/>
            <person name="Sakai H."/>
            <person name="Lee S.S."/>
            <person name="Kim J."/>
            <person name="Numa H."/>
            <person name="Itoh T."/>
            <person name="Buell C.R."/>
            <person name="Matsumoto T."/>
        </authorList>
    </citation>
    <scope>GENOME REANNOTATION</scope>
    <source>
        <strain>cv. Nipponbare</strain>
    </source>
</reference>
<reference key="4">
    <citation type="journal article" date="2005" name="PLoS Biol.">
        <title>The genomes of Oryza sativa: a history of duplications.</title>
        <authorList>
            <person name="Yu J."/>
            <person name="Wang J."/>
            <person name="Lin W."/>
            <person name="Li S."/>
            <person name="Li H."/>
            <person name="Zhou J."/>
            <person name="Ni P."/>
            <person name="Dong W."/>
            <person name="Hu S."/>
            <person name="Zeng C."/>
            <person name="Zhang J."/>
            <person name="Zhang Y."/>
            <person name="Li R."/>
            <person name="Xu Z."/>
            <person name="Li S."/>
            <person name="Li X."/>
            <person name="Zheng H."/>
            <person name="Cong L."/>
            <person name="Lin L."/>
            <person name="Yin J."/>
            <person name="Geng J."/>
            <person name="Li G."/>
            <person name="Shi J."/>
            <person name="Liu J."/>
            <person name="Lv H."/>
            <person name="Li J."/>
            <person name="Wang J."/>
            <person name="Deng Y."/>
            <person name="Ran L."/>
            <person name="Shi X."/>
            <person name="Wang X."/>
            <person name="Wu Q."/>
            <person name="Li C."/>
            <person name="Ren X."/>
            <person name="Wang J."/>
            <person name="Wang X."/>
            <person name="Li D."/>
            <person name="Liu D."/>
            <person name="Zhang X."/>
            <person name="Ji Z."/>
            <person name="Zhao W."/>
            <person name="Sun Y."/>
            <person name="Zhang Z."/>
            <person name="Bao J."/>
            <person name="Han Y."/>
            <person name="Dong L."/>
            <person name="Ji J."/>
            <person name="Chen P."/>
            <person name="Wu S."/>
            <person name="Liu J."/>
            <person name="Xiao Y."/>
            <person name="Bu D."/>
            <person name="Tan J."/>
            <person name="Yang L."/>
            <person name="Ye C."/>
            <person name="Zhang J."/>
            <person name="Xu J."/>
            <person name="Zhou Y."/>
            <person name="Yu Y."/>
            <person name="Zhang B."/>
            <person name="Zhuang S."/>
            <person name="Wei H."/>
            <person name="Liu B."/>
            <person name="Lei M."/>
            <person name="Yu H."/>
            <person name="Li Y."/>
            <person name="Xu H."/>
            <person name="Wei S."/>
            <person name="He X."/>
            <person name="Fang L."/>
            <person name="Zhang Z."/>
            <person name="Zhang Y."/>
            <person name="Huang X."/>
            <person name="Su Z."/>
            <person name="Tong W."/>
            <person name="Li J."/>
            <person name="Tong Z."/>
            <person name="Li S."/>
            <person name="Ye J."/>
            <person name="Wang L."/>
            <person name="Fang L."/>
            <person name="Lei T."/>
            <person name="Chen C.-S."/>
            <person name="Chen H.-C."/>
            <person name="Xu Z."/>
            <person name="Li H."/>
            <person name="Huang H."/>
            <person name="Zhang F."/>
            <person name="Xu H."/>
            <person name="Li N."/>
            <person name="Zhao C."/>
            <person name="Li S."/>
            <person name="Dong L."/>
            <person name="Huang Y."/>
            <person name="Li L."/>
            <person name="Xi Y."/>
            <person name="Qi Q."/>
            <person name="Li W."/>
            <person name="Zhang B."/>
            <person name="Hu W."/>
            <person name="Zhang Y."/>
            <person name="Tian X."/>
            <person name="Jiao Y."/>
            <person name="Liang X."/>
            <person name="Jin J."/>
            <person name="Gao L."/>
            <person name="Zheng W."/>
            <person name="Hao B."/>
            <person name="Liu S.-M."/>
            <person name="Wang W."/>
            <person name="Yuan L."/>
            <person name="Cao M."/>
            <person name="McDermott J."/>
            <person name="Samudrala R."/>
            <person name="Wang J."/>
            <person name="Wong G.K.-S."/>
            <person name="Yang H."/>
        </authorList>
    </citation>
    <scope>NUCLEOTIDE SEQUENCE [LARGE SCALE GENOMIC DNA]</scope>
    <source>
        <strain>cv. Nipponbare</strain>
    </source>
</reference>
<reference key="5">
    <citation type="journal article" date="2003" name="Science">
        <title>Collection, mapping, and annotation of over 28,000 cDNA clones from japonica rice.</title>
        <authorList>
            <consortium name="The rice full-length cDNA consortium"/>
        </authorList>
    </citation>
    <scope>NUCLEOTIDE SEQUENCE [LARGE SCALE MRNA]</scope>
    <source>
        <strain>cv. Nipponbare</strain>
    </source>
</reference>
<keyword id="KW-0472">Membrane</keyword>
<keyword id="KW-1185">Reference proteome</keyword>
<keyword id="KW-0732">Signal</keyword>
<keyword id="KW-0812">Transmembrane</keyword>
<keyword id="KW-1133">Transmembrane helix</keyword>
<evidence type="ECO:0000255" key="1"/>
<evidence type="ECO:0000305" key="2"/>
<sequence>MARRVSTTRLLLLLLLVAAAAAAAAAGDQEDPRGGGDNGTARLDRRTKMFLHAARASDGGATGMEKAGLGLFDAFFASLSMILVSEIGDETFIIAALMAMRHPKSTVLSGALSALVVMTILSTGLGRIVPNLISRKHTNSAATVLYAFFGLRLLYIAWRSDSKASQKKEIEEVEEKLEAGQGKSTFRRIFSRFCTPIFLESFVLTFLAEWGDRSQIATIALATHKNAVGVAVGATLGHTICTSFAVVGGSMLASKISQGTVATIGGLLFLGFSLSSYFYPPL</sequence>
<gene>
    <name type="ordered locus">Os08g0528500</name>
    <name type="ordered locus">LOC_Os08g41670</name>
    <name type="ORF">OJ1770_H02.9</name>
    <name type="ORF">OsJ_28031</name>
</gene>
<feature type="signal peptide" evidence="1">
    <location>
        <begin position="1"/>
        <end position="26"/>
    </location>
</feature>
<feature type="chain" id="PRO_0000398775" description="GDT1-like protein 4">
    <location>
        <begin position="27"/>
        <end position="282"/>
    </location>
</feature>
<feature type="transmembrane region" description="Helical" evidence="1">
    <location>
        <begin position="67"/>
        <end position="87"/>
    </location>
</feature>
<feature type="transmembrane region" description="Helical" evidence="1">
    <location>
        <begin position="106"/>
        <end position="126"/>
    </location>
</feature>
<feature type="transmembrane region" description="Helical" evidence="1">
    <location>
        <begin position="138"/>
        <end position="158"/>
    </location>
</feature>
<feature type="transmembrane region" description="Helical" evidence="1">
    <location>
        <begin position="189"/>
        <end position="209"/>
    </location>
</feature>
<feature type="transmembrane region" description="Helical" evidence="1">
    <location>
        <begin position="227"/>
        <end position="247"/>
    </location>
</feature>
<feature type="transmembrane region" description="Helical" evidence="1">
    <location>
        <begin position="259"/>
        <end position="279"/>
    </location>
</feature>
<accession>Q6ZIB9</accession>
<accession>A0A0P0XIL0</accession>
<accession>A3BV37</accession>